<keyword id="KW-0067">ATP-binding</keyword>
<keyword id="KW-0547">Nucleotide-binding</keyword>
<keyword id="KW-0808">Transferase</keyword>
<organism>
    <name type="scientific">Pseudomonas fluorescens (strain Pf0-1)</name>
    <dbReference type="NCBI Taxonomy" id="205922"/>
    <lineage>
        <taxon>Bacteria</taxon>
        <taxon>Pseudomonadati</taxon>
        <taxon>Pseudomonadota</taxon>
        <taxon>Gammaproteobacteria</taxon>
        <taxon>Pseudomonadales</taxon>
        <taxon>Pseudomonadaceae</taxon>
        <taxon>Pseudomonas</taxon>
    </lineage>
</organism>
<name>MDCB_PSEPF</name>
<protein>
    <recommendedName>
        <fullName evidence="1">Probable 2-(5''-triphosphoribosyl)-3'-dephosphocoenzyme-A synthase</fullName>
        <shortName evidence="1">2-(5''-triphosphoribosyl)-3'-dephospho-CoA synthase</shortName>
        <ecNumber evidence="1">2.4.2.52</ecNumber>
    </recommendedName>
</protein>
<gene>
    <name evidence="1" type="primary">mdcB</name>
    <name type="ordered locus">Pfl01_5301</name>
</gene>
<dbReference type="EC" id="2.4.2.52" evidence="1"/>
<dbReference type="EMBL" id="CP000094">
    <property type="protein sequence ID" value="ABA77038.1"/>
    <property type="molecule type" value="Genomic_DNA"/>
</dbReference>
<dbReference type="RefSeq" id="WP_011336359.1">
    <property type="nucleotide sequence ID" value="NC_007492.2"/>
</dbReference>
<dbReference type="KEGG" id="pfo:Pfl01_5301"/>
<dbReference type="eggNOG" id="COG1767">
    <property type="taxonomic scope" value="Bacteria"/>
</dbReference>
<dbReference type="HOGENOM" id="CLU_056179_0_0_6"/>
<dbReference type="Proteomes" id="UP000002704">
    <property type="component" value="Chromosome"/>
</dbReference>
<dbReference type="GO" id="GO:0005524">
    <property type="term" value="F:ATP binding"/>
    <property type="evidence" value="ECO:0007669"/>
    <property type="project" value="UniProtKB-KW"/>
</dbReference>
<dbReference type="GO" id="GO:0046917">
    <property type="term" value="F:triphosphoribosyl-dephospho-CoA synthase activity"/>
    <property type="evidence" value="ECO:0007669"/>
    <property type="project" value="UniProtKB-UniRule"/>
</dbReference>
<dbReference type="GO" id="GO:0051191">
    <property type="term" value="P:prosthetic group biosynthetic process"/>
    <property type="evidence" value="ECO:0007669"/>
    <property type="project" value="TreeGrafter"/>
</dbReference>
<dbReference type="Gene3D" id="1.10.4200.10">
    <property type="entry name" value="Triphosphoribosyl-dephospho-CoA protein"/>
    <property type="match status" value="2"/>
</dbReference>
<dbReference type="HAMAP" id="MF_01883">
    <property type="entry name" value="MdcB"/>
    <property type="match status" value="1"/>
</dbReference>
<dbReference type="InterPro" id="IPR002736">
    <property type="entry name" value="CitG"/>
</dbReference>
<dbReference type="InterPro" id="IPR017555">
    <property type="entry name" value="TriPribosyl-deP-CoA_syn"/>
</dbReference>
<dbReference type="NCBIfam" id="TIGR03132">
    <property type="entry name" value="malonate_mdcB"/>
    <property type="match status" value="1"/>
</dbReference>
<dbReference type="NCBIfam" id="NF002315">
    <property type="entry name" value="PRK01237.1"/>
    <property type="match status" value="1"/>
</dbReference>
<dbReference type="PANTHER" id="PTHR30201:SF2">
    <property type="entry name" value="2-(5''-TRIPHOSPHORIBOSYL)-3'-DEPHOSPHOCOENZYME-A SYNTHASE"/>
    <property type="match status" value="1"/>
</dbReference>
<dbReference type="PANTHER" id="PTHR30201">
    <property type="entry name" value="TRIPHOSPHORIBOSYL-DEPHOSPHO-COA SYNTHASE"/>
    <property type="match status" value="1"/>
</dbReference>
<dbReference type="Pfam" id="PF01874">
    <property type="entry name" value="CitG"/>
    <property type="match status" value="1"/>
</dbReference>
<feature type="chain" id="PRO_0000255404" description="Probable 2-(5''-triphosphoribosyl)-3'-dephosphocoenzyme-A synthase">
    <location>
        <begin position="1"/>
        <end position="290"/>
    </location>
</feature>
<evidence type="ECO:0000255" key="1">
    <source>
        <dbReference type="HAMAP-Rule" id="MF_01883"/>
    </source>
</evidence>
<reference key="1">
    <citation type="journal article" date="2009" name="Genome Biol.">
        <title>Genomic and genetic analyses of diversity and plant interactions of Pseudomonas fluorescens.</title>
        <authorList>
            <person name="Silby M.W."/>
            <person name="Cerdeno-Tarraga A.M."/>
            <person name="Vernikos G.S."/>
            <person name="Giddens S.R."/>
            <person name="Jackson R.W."/>
            <person name="Preston G.M."/>
            <person name="Zhang X.-X."/>
            <person name="Moon C.D."/>
            <person name="Gehrig S.M."/>
            <person name="Godfrey S.A.C."/>
            <person name="Knight C.G."/>
            <person name="Malone J.G."/>
            <person name="Robinson Z."/>
            <person name="Spiers A.J."/>
            <person name="Harris S."/>
            <person name="Challis G.L."/>
            <person name="Yaxley A.M."/>
            <person name="Harris D."/>
            <person name="Seeger K."/>
            <person name="Murphy L."/>
            <person name="Rutter S."/>
            <person name="Squares R."/>
            <person name="Quail M.A."/>
            <person name="Saunders E."/>
            <person name="Mavromatis K."/>
            <person name="Brettin T.S."/>
            <person name="Bentley S.D."/>
            <person name="Hothersall J."/>
            <person name="Stephens E."/>
            <person name="Thomas C.M."/>
            <person name="Parkhill J."/>
            <person name="Levy S.B."/>
            <person name="Rainey P.B."/>
            <person name="Thomson N.R."/>
        </authorList>
    </citation>
    <scope>NUCLEOTIDE SEQUENCE [LARGE SCALE GENOMIC DNA]</scope>
    <source>
        <strain>Pf0-1</strain>
    </source>
</reference>
<proteinExistence type="inferred from homology"/>
<accession>Q3K5B6</accession>
<comment type="function">
    <text evidence="1">Involved in the formation of 2-(5''-phosphoribosyl)-3'-dephosphocoenzyme-A, the prosthetic group of the acyl-carrier protein of the malonate decarboxylase.</text>
</comment>
<comment type="catalytic activity">
    <reaction evidence="1">
        <text>3'-dephospho-CoA + ATP = 2'-(5''-triphospho-alpha-D-ribosyl)-3'-dephospho-CoA + adenine</text>
        <dbReference type="Rhea" id="RHEA:15117"/>
        <dbReference type="ChEBI" id="CHEBI:16708"/>
        <dbReference type="ChEBI" id="CHEBI:30616"/>
        <dbReference type="ChEBI" id="CHEBI:57328"/>
        <dbReference type="ChEBI" id="CHEBI:61378"/>
        <dbReference type="EC" id="2.4.2.52"/>
    </reaction>
</comment>
<comment type="similarity">
    <text evidence="1">Belongs to the CitG/MdcB family.</text>
</comment>
<sequence>MHALNLQPKTITLAERLADLAVDALIDEADLSPKPALVDRRGNGAHTDLHLGLMHASALALWPAFKEMAEAALEFGEIGLPLREAIGRIGREGEQAMLATTHGVNTHRGAIWALGLLVTAAALDTKSTSAGAVTLRAARLALLDDRYAPRPLSHGAQVAQRYGARGAREEAQLGFPSVVQRGLPQLKRSRAAGHGEQNARLDALLAIMTDLADTCVLYRAGEQGLHAMQHGARAVLDAGGSASLTGRRRLHELDQQLIALNASPGGAADLLAASLLLDRIERDGILQGAF</sequence>